<gene>
    <name evidence="1" type="primary">acsA</name>
    <name type="ordered locus">RALTA_A2028</name>
</gene>
<accession>B3R1X2</accession>
<dbReference type="EC" id="6.2.1.1" evidence="1"/>
<dbReference type="EMBL" id="CU633749">
    <property type="protein sequence ID" value="CAQ69969.1"/>
    <property type="molecule type" value="Genomic_DNA"/>
</dbReference>
<dbReference type="RefSeq" id="WP_012353279.1">
    <property type="nucleotide sequence ID" value="NC_010528.1"/>
</dbReference>
<dbReference type="SMR" id="B3R1X2"/>
<dbReference type="GeneID" id="29762072"/>
<dbReference type="KEGG" id="cti:RALTA_A2028"/>
<dbReference type="eggNOG" id="COG0365">
    <property type="taxonomic scope" value="Bacteria"/>
</dbReference>
<dbReference type="HOGENOM" id="CLU_000022_3_6_4"/>
<dbReference type="BioCyc" id="CTAI977880:RALTA_RS09845-MONOMER"/>
<dbReference type="Proteomes" id="UP000001692">
    <property type="component" value="Chromosome 1"/>
</dbReference>
<dbReference type="GO" id="GO:0005829">
    <property type="term" value="C:cytosol"/>
    <property type="evidence" value="ECO:0007669"/>
    <property type="project" value="TreeGrafter"/>
</dbReference>
<dbReference type="GO" id="GO:0003987">
    <property type="term" value="F:acetate-CoA ligase activity"/>
    <property type="evidence" value="ECO:0007669"/>
    <property type="project" value="UniProtKB-UniRule"/>
</dbReference>
<dbReference type="GO" id="GO:0016208">
    <property type="term" value="F:AMP binding"/>
    <property type="evidence" value="ECO:0007669"/>
    <property type="project" value="InterPro"/>
</dbReference>
<dbReference type="GO" id="GO:0005524">
    <property type="term" value="F:ATP binding"/>
    <property type="evidence" value="ECO:0007669"/>
    <property type="project" value="UniProtKB-KW"/>
</dbReference>
<dbReference type="GO" id="GO:0046872">
    <property type="term" value="F:metal ion binding"/>
    <property type="evidence" value="ECO:0007669"/>
    <property type="project" value="UniProtKB-KW"/>
</dbReference>
<dbReference type="GO" id="GO:0019427">
    <property type="term" value="P:acetyl-CoA biosynthetic process from acetate"/>
    <property type="evidence" value="ECO:0007669"/>
    <property type="project" value="InterPro"/>
</dbReference>
<dbReference type="CDD" id="cd05966">
    <property type="entry name" value="ACS"/>
    <property type="match status" value="1"/>
</dbReference>
<dbReference type="FunFam" id="3.40.50.12780:FF:000001">
    <property type="entry name" value="Acetyl-coenzyme A synthetase"/>
    <property type="match status" value="1"/>
</dbReference>
<dbReference type="Gene3D" id="3.30.300.30">
    <property type="match status" value="1"/>
</dbReference>
<dbReference type="Gene3D" id="3.40.50.12780">
    <property type="entry name" value="N-terminal domain of ligase-like"/>
    <property type="match status" value="1"/>
</dbReference>
<dbReference type="HAMAP" id="MF_01123">
    <property type="entry name" value="Ac_CoA_synth"/>
    <property type="match status" value="1"/>
</dbReference>
<dbReference type="InterPro" id="IPR011904">
    <property type="entry name" value="Ac_CoA_lig"/>
</dbReference>
<dbReference type="InterPro" id="IPR032387">
    <property type="entry name" value="ACAS_N"/>
</dbReference>
<dbReference type="InterPro" id="IPR025110">
    <property type="entry name" value="AMP-bd_C"/>
</dbReference>
<dbReference type="InterPro" id="IPR045851">
    <property type="entry name" value="AMP-bd_C_sf"/>
</dbReference>
<dbReference type="InterPro" id="IPR020845">
    <property type="entry name" value="AMP-binding_CS"/>
</dbReference>
<dbReference type="InterPro" id="IPR000873">
    <property type="entry name" value="AMP-dep_synth/lig_dom"/>
</dbReference>
<dbReference type="InterPro" id="IPR042099">
    <property type="entry name" value="ANL_N_sf"/>
</dbReference>
<dbReference type="NCBIfam" id="TIGR02188">
    <property type="entry name" value="Ac_CoA_lig_AcsA"/>
    <property type="match status" value="1"/>
</dbReference>
<dbReference type="NCBIfam" id="NF001208">
    <property type="entry name" value="PRK00174.1"/>
    <property type="match status" value="1"/>
</dbReference>
<dbReference type="PANTHER" id="PTHR24095">
    <property type="entry name" value="ACETYL-COENZYME A SYNTHETASE"/>
    <property type="match status" value="1"/>
</dbReference>
<dbReference type="PANTHER" id="PTHR24095:SF14">
    <property type="entry name" value="ACETYL-COENZYME A SYNTHETASE 1"/>
    <property type="match status" value="1"/>
</dbReference>
<dbReference type="Pfam" id="PF16177">
    <property type="entry name" value="ACAS_N"/>
    <property type="match status" value="1"/>
</dbReference>
<dbReference type="Pfam" id="PF00501">
    <property type="entry name" value="AMP-binding"/>
    <property type="match status" value="1"/>
</dbReference>
<dbReference type="Pfam" id="PF13193">
    <property type="entry name" value="AMP-binding_C"/>
    <property type="match status" value="1"/>
</dbReference>
<dbReference type="SUPFAM" id="SSF56801">
    <property type="entry name" value="Acetyl-CoA synthetase-like"/>
    <property type="match status" value="1"/>
</dbReference>
<dbReference type="PROSITE" id="PS00455">
    <property type="entry name" value="AMP_BINDING"/>
    <property type="match status" value="1"/>
</dbReference>
<evidence type="ECO:0000255" key="1">
    <source>
        <dbReference type="HAMAP-Rule" id="MF_01123"/>
    </source>
</evidence>
<reference key="1">
    <citation type="journal article" date="2008" name="Genome Res.">
        <title>Genome sequence of the beta-rhizobium Cupriavidus taiwanensis and comparative genomics of rhizobia.</title>
        <authorList>
            <person name="Amadou C."/>
            <person name="Pascal G."/>
            <person name="Mangenot S."/>
            <person name="Glew M."/>
            <person name="Bontemps C."/>
            <person name="Capela D."/>
            <person name="Carrere S."/>
            <person name="Cruveiller S."/>
            <person name="Dossat C."/>
            <person name="Lajus A."/>
            <person name="Marchetti M."/>
            <person name="Poinsot V."/>
            <person name="Rouy Z."/>
            <person name="Servin B."/>
            <person name="Saad M."/>
            <person name="Schenowitz C."/>
            <person name="Barbe V."/>
            <person name="Batut J."/>
            <person name="Medigue C."/>
            <person name="Masson-Boivin C."/>
        </authorList>
    </citation>
    <scope>NUCLEOTIDE SEQUENCE [LARGE SCALE GENOMIC DNA]</scope>
    <source>
        <strain>DSM 17343 / BCRC 17206 / CCUG 44338 / CIP 107171 / LMG 19424 / R1</strain>
    </source>
</reference>
<keyword id="KW-0007">Acetylation</keyword>
<keyword id="KW-0067">ATP-binding</keyword>
<keyword id="KW-0436">Ligase</keyword>
<keyword id="KW-0460">Magnesium</keyword>
<keyword id="KW-0479">Metal-binding</keyword>
<keyword id="KW-0547">Nucleotide-binding</keyword>
<organism>
    <name type="scientific">Cupriavidus taiwanensis (strain DSM 17343 / BCRC 17206 / CCUG 44338 / CIP 107171 / LMG 19424 / R1)</name>
    <name type="common">Ralstonia taiwanensis (strain LMG 19424)</name>
    <dbReference type="NCBI Taxonomy" id="977880"/>
    <lineage>
        <taxon>Bacteria</taxon>
        <taxon>Pseudomonadati</taxon>
        <taxon>Pseudomonadota</taxon>
        <taxon>Betaproteobacteria</taxon>
        <taxon>Burkholderiales</taxon>
        <taxon>Burkholderiaceae</taxon>
        <taxon>Cupriavidus</taxon>
    </lineage>
</organism>
<sequence length="660" mass="72452">MSAIESVMQEHRVFNPPEAFASQAAIPSMDAYRALCDEAERDYEGFWARYARELLHWNKPFTKVLDESNAPFYKWFEDGELNASYNCLDRNLQNGNADKVAIVFEADDGTVTRVTYRELHAKVCRLANGLKTLGIRKGDRVVIYMPMSVEGVAAMQACARLGATHSVVFGGFSAKSLQERLVDVGAVALITADEQMRGGKALPLKAIADDALALGGCEAVKNVIVYRRTGGNVGWTEGRDRWLDDVCANQPDTCEAEPVGAEHPLFVLYTSGSTGKPKGVQHSTGGYLLWALMTMKWTFDIKPDDLFWCTADIGWVTGHTYIAYGPLAAGATQVVFEGVPTYPNAGRFWDMIARHKVSIFYTAPTAIRSLIKAAEADEKIHPKQYDLSSLRLLGTVGEPINPEAWMWYYKNVGNENCPIVDTFWQTETGGHMITPLPGATPLVPGSCTLPLPGIMAAIVDETGHDVPNGSGGILVVKRPWPAMIRTIWGDPERFKKSYFPEELGGKLYLAGDGSIRDKDTGYFTIMGRIDDVLNVSGHRMGTMEIESALVANPLVAEAAVVGRPDDMTGEAICAFVVLKRSRPSGEEAAKLATELRNWVGKEIGPIAKPKDIRFGDNLPKTRSGKIMRRLLRSLAKGEEITQDTSTLENPAILEQLKQAQ</sequence>
<protein>
    <recommendedName>
        <fullName evidence="1">Acetyl-coenzyme A synthetase</fullName>
        <shortName evidence="1">AcCoA synthetase</shortName>
        <shortName evidence="1">Acs</shortName>
        <ecNumber evidence="1">6.2.1.1</ecNumber>
    </recommendedName>
    <alternativeName>
        <fullName evidence="1">Acetate--CoA ligase</fullName>
    </alternativeName>
    <alternativeName>
        <fullName evidence="1">Acyl-activating enzyme</fullName>
    </alternativeName>
</protein>
<proteinExistence type="inferred from homology"/>
<feature type="chain" id="PRO_1000137262" description="Acetyl-coenzyme A synthetase">
    <location>
        <begin position="1"/>
        <end position="660"/>
    </location>
</feature>
<feature type="binding site" evidence="1">
    <location>
        <begin position="197"/>
        <end position="200"/>
    </location>
    <ligand>
        <name>CoA</name>
        <dbReference type="ChEBI" id="CHEBI:57287"/>
    </ligand>
</feature>
<feature type="binding site" evidence="1">
    <location>
        <position position="317"/>
    </location>
    <ligand>
        <name>CoA</name>
        <dbReference type="ChEBI" id="CHEBI:57287"/>
    </ligand>
</feature>
<feature type="binding site" evidence="1">
    <location>
        <begin position="397"/>
        <end position="399"/>
    </location>
    <ligand>
        <name>ATP</name>
        <dbReference type="ChEBI" id="CHEBI:30616"/>
    </ligand>
</feature>
<feature type="binding site" evidence="1">
    <location>
        <begin position="421"/>
        <end position="426"/>
    </location>
    <ligand>
        <name>ATP</name>
        <dbReference type="ChEBI" id="CHEBI:30616"/>
    </ligand>
</feature>
<feature type="binding site" evidence="1">
    <location>
        <position position="512"/>
    </location>
    <ligand>
        <name>ATP</name>
        <dbReference type="ChEBI" id="CHEBI:30616"/>
    </ligand>
</feature>
<feature type="binding site" evidence="1">
    <location>
        <position position="528"/>
    </location>
    <ligand>
        <name>ATP</name>
        <dbReference type="ChEBI" id="CHEBI:30616"/>
    </ligand>
</feature>
<feature type="binding site" evidence="1">
    <location>
        <position position="536"/>
    </location>
    <ligand>
        <name>CoA</name>
        <dbReference type="ChEBI" id="CHEBI:57287"/>
    </ligand>
</feature>
<feature type="binding site" evidence="1">
    <location>
        <position position="539"/>
    </location>
    <ligand>
        <name>ATP</name>
        <dbReference type="ChEBI" id="CHEBI:30616"/>
    </ligand>
</feature>
<feature type="binding site" evidence="1">
    <location>
        <position position="550"/>
    </location>
    <ligand>
        <name>Mg(2+)</name>
        <dbReference type="ChEBI" id="CHEBI:18420"/>
    </ligand>
</feature>
<feature type="binding site" evidence="1">
    <location>
        <position position="555"/>
    </location>
    <ligand>
        <name>Mg(2+)</name>
        <dbReference type="ChEBI" id="CHEBI:18420"/>
    </ligand>
</feature>
<feature type="modified residue" description="N6-acetyllysine" evidence="1">
    <location>
        <position position="625"/>
    </location>
</feature>
<name>ACSA_CUPTR</name>
<comment type="function">
    <text evidence="1">Catalyzes the conversion of acetate into acetyl-CoA (AcCoA), an essential intermediate at the junction of anabolic and catabolic pathways. AcsA undergoes a two-step reaction. In the first half reaction, AcsA combines acetate with ATP to form acetyl-adenylate (AcAMP) intermediate. In the second half reaction, it can then transfer the acetyl group from AcAMP to the sulfhydryl group of CoA, forming the product AcCoA.</text>
</comment>
<comment type="catalytic activity">
    <reaction evidence="1">
        <text>acetate + ATP + CoA = acetyl-CoA + AMP + diphosphate</text>
        <dbReference type="Rhea" id="RHEA:23176"/>
        <dbReference type="ChEBI" id="CHEBI:30089"/>
        <dbReference type="ChEBI" id="CHEBI:30616"/>
        <dbReference type="ChEBI" id="CHEBI:33019"/>
        <dbReference type="ChEBI" id="CHEBI:57287"/>
        <dbReference type="ChEBI" id="CHEBI:57288"/>
        <dbReference type="ChEBI" id="CHEBI:456215"/>
        <dbReference type="EC" id="6.2.1.1"/>
    </reaction>
</comment>
<comment type="cofactor">
    <cofactor evidence="1">
        <name>Mg(2+)</name>
        <dbReference type="ChEBI" id="CHEBI:18420"/>
    </cofactor>
</comment>
<comment type="PTM">
    <text evidence="1">Acetylated. Deacetylation by the SIR2-homolog deacetylase activates the enzyme.</text>
</comment>
<comment type="similarity">
    <text evidence="1">Belongs to the ATP-dependent AMP-binding enzyme family.</text>
</comment>